<proteinExistence type="inferred from homology"/>
<comment type="function">
    <text evidence="1">Catalyzes the NAD(+)-dependent oxidation of L-threonine to 2-amino-3-ketobutyrate.</text>
</comment>
<comment type="catalytic activity">
    <reaction evidence="1">
        <text>L-threonine + NAD(+) = (2S)-2-amino-3-oxobutanoate + NADH + H(+)</text>
        <dbReference type="Rhea" id="RHEA:13161"/>
        <dbReference type="ChEBI" id="CHEBI:15378"/>
        <dbReference type="ChEBI" id="CHEBI:57540"/>
        <dbReference type="ChEBI" id="CHEBI:57926"/>
        <dbReference type="ChEBI" id="CHEBI:57945"/>
        <dbReference type="ChEBI" id="CHEBI:78948"/>
        <dbReference type="EC" id="1.1.1.103"/>
    </reaction>
</comment>
<comment type="cofactor">
    <cofactor evidence="1">
        <name>Zn(2+)</name>
        <dbReference type="ChEBI" id="CHEBI:29105"/>
    </cofactor>
    <text evidence="1">Binds 2 Zn(2+) ions per subunit.</text>
</comment>
<comment type="pathway">
    <text evidence="1">Amino-acid degradation; L-threonine degradation via oxydo-reductase pathway; glycine from L-threonine: step 1/2.</text>
</comment>
<comment type="subunit">
    <text evidence="1">Homotetramer.</text>
</comment>
<comment type="subcellular location">
    <subcellularLocation>
        <location evidence="1">Cytoplasm</location>
    </subcellularLocation>
</comment>
<comment type="similarity">
    <text evidence="1">Belongs to the zinc-containing alcohol dehydrogenase family.</text>
</comment>
<evidence type="ECO:0000255" key="1">
    <source>
        <dbReference type="HAMAP-Rule" id="MF_00627"/>
    </source>
</evidence>
<gene>
    <name evidence="1" type="primary">tdh</name>
    <name type="ordered locus">Bphyt_7003</name>
</gene>
<name>TDH_PARPJ</name>
<protein>
    <recommendedName>
        <fullName evidence="1">L-threonine 3-dehydrogenase</fullName>
        <shortName evidence="1">TDH</shortName>
        <ecNumber evidence="1">1.1.1.103</ecNumber>
    </recommendedName>
</protein>
<feature type="chain" id="PRO_1000130542" description="L-threonine 3-dehydrogenase">
    <location>
        <begin position="1"/>
        <end position="343"/>
    </location>
</feature>
<feature type="active site" description="Charge relay system" evidence="1">
    <location>
        <position position="40"/>
    </location>
</feature>
<feature type="active site" description="Charge relay system" evidence="1">
    <location>
        <position position="43"/>
    </location>
</feature>
<feature type="binding site" evidence="1">
    <location>
        <position position="38"/>
    </location>
    <ligand>
        <name>Zn(2+)</name>
        <dbReference type="ChEBI" id="CHEBI:29105"/>
        <label>1</label>
        <note>catalytic</note>
    </ligand>
</feature>
<feature type="binding site" evidence="1">
    <location>
        <position position="63"/>
    </location>
    <ligand>
        <name>Zn(2+)</name>
        <dbReference type="ChEBI" id="CHEBI:29105"/>
        <label>1</label>
        <note>catalytic</note>
    </ligand>
</feature>
<feature type="binding site" evidence="1">
    <location>
        <position position="64"/>
    </location>
    <ligand>
        <name>Zn(2+)</name>
        <dbReference type="ChEBI" id="CHEBI:29105"/>
        <label>1</label>
        <note>catalytic</note>
    </ligand>
</feature>
<feature type="binding site" evidence="1">
    <location>
        <position position="93"/>
    </location>
    <ligand>
        <name>Zn(2+)</name>
        <dbReference type="ChEBI" id="CHEBI:29105"/>
        <label>2</label>
    </ligand>
</feature>
<feature type="binding site" evidence="1">
    <location>
        <position position="96"/>
    </location>
    <ligand>
        <name>Zn(2+)</name>
        <dbReference type="ChEBI" id="CHEBI:29105"/>
        <label>2</label>
    </ligand>
</feature>
<feature type="binding site" evidence="1">
    <location>
        <position position="99"/>
    </location>
    <ligand>
        <name>Zn(2+)</name>
        <dbReference type="ChEBI" id="CHEBI:29105"/>
        <label>2</label>
    </ligand>
</feature>
<feature type="binding site" evidence="1">
    <location>
        <position position="107"/>
    </location>
    <ligand>
        <name>Zn(2+)</name>
        <dbReference type="ChEBI" id="CHEBI:29105"/>
        <label>2</label>
    </ligand>
</feature>
<feature type="binding site" evidence="1">
    <location>
        <position position="175"/>
    </location>
    <ligand>
        <name>NAD(+)</name>
        <dbReference type="ChEBI" id="CHEBI:57540"/>
    </ligand>
</feature>
<feature type="binding site" evidence="1">
    <location>
        <position position="195"/>
    </location>
    <ligand>
        <name>NAD(+)</name>
        <dbReference type="ChEBI" id="CHEBI:57540"/>
    </ligand>
</feature>
<feature type="binding site" evidence="1">
    <location>
        <position position="200"/>
    </location>
    <ligand>
        <name>NAD(+)</name>
        <dbReference type="ChEBI" id="CHEBI:57540"/>
    </ligand>
</feature>
<feature type="binding site" evidence="1">
    <location>
        <begin position="262"/>
        <end position="264"/>
    </location>
    <ligand>
        <name>NAD(+)</name>
        <dbReference type="ChEBI" id="CHEBI:57540"/>
    </ligand>
</feature>
<feature type="binding site" evidence="1">
    <location>
        <begin position="286"/>
        <end position="287"/>
    </location>
    <ligand>
        <name>NAD(+)</name>
        <dbReference type="ChEBI" id="CHEBI:57540"/>
    </ligand>
</feature>
<feature type="site" description="Important for catalytic activity for the proton relay mechanism but does not participate directly in the coordination of zinc atom" evidence="1">
    <location>
        <position position="148"/>
    </location>
</feature>
<keyword id="KW-0963">Cytoplasm</keyword>
<keyword id="KW-0479">Metal-binding</keyword>
<keyword id="KW-0520">NAD</keyword>
<keyword id="KW-0560">Oxidoreductase</keyword>
<keyword id="KW-0862">Zinc</keyword>
<sequence>MKALAKLERAPGLTLTDVKKPEVGHNDVMIRITRTAICGTDIHIWKWDDWAQKTIPVPMHVGHEYVGEIVEMGQEVRGFAIGDRVSGEGHITCGFCRNCRAGRRHLCRNTVGVGVNREGAFAEYLVIPAFNAFKIPPEISDDLAAIFDPFGNATHTALSFNLVGEDVLITGAGPIGIMAVAIAKHVGARNVVITDVNDYRLELARKMGATRAVNVSRESLRDVMADLHMTEGFDVGLEMSGVPSAFTSMLEAMNHGGKIALLGIPPAQTAIDWTQVIFKGLEIKGIYGREMFETWYKMVAMLQSGLDLSPILTHHFKVDDYQEAFATMLSGESGKVILDWTAA</sequence>
<dbReference type="EC" id="1.1.1.103" evidence="1"/>
<dbReference type="EMBL" id="CP001053">
    <property type="protein sequence ID" value="ACD21291.1"/>
    <property type="molecule type" value="Genomic_DNA"/>
</dbReference>
<dbReference type="RefSeq" id="WP_012428787.1">
    <property type="nucleotide sequence ID" value="NC_010676.1"/>
</dbReference>
<dbReference type="SMR" id="B2T7X5"/>
<dbReference type="STRING" id="398527.Bphyt_7003"/>
<dbReference type="GeneID" id="97310551"/>
<dbReference type="KEGG" id="bpy:Bphyt_7003"/>
<dbReference type="eggNOG" id="COG1063">
    <property type="taxonomic scope" value="Bacteria"/>
</dbReference>
<dbReference type="HOGENOM" id="CLU_026673_11_0_4"/>
<dbReference type="OrthoDB" id="5484143at2"/>
<dbReference type="UniPathway" id="UPA00046">
    <property type="reaction ID" value="UER00505"/>
</dbReference>
<dbReference type="Proteomes" id="UP000001739">
    <property type="component" value="Chromosome 2"/>
</dbReference>
<dbReference type="GO" id="GO:0005737">
    <property type="term" value="C:cytoplasm"/>
    <property type="evidence" value="ECO:0007669"/>
    <property type="project" value="UniProtKB-SubCell"/>
</dbReference>
<dbReference type="GO" id="GO:0008743">
    <property type="term" value="F:L-threonine 3-dehydrogenase activity"/>
    <property type="evidence" value="ECO:0007669"/>
    <property type="project" value="UniProtKB-UniRule"/>
</dbReference>
<dbReference type="GO" id="GO:0008270">
    <property type="term" value="F:zinc ion binding"/>
    <property type="evidence" value="ECO:0007669"/>
    <property type="project" value="UniProtKB-UniRule"/>
</dbReference>
<dbReference type="GO" id="GO:0019518">
    <property type="term" value="P:L-threonine catabolic process to glycine"/>
    <property type="evidence" value="ECO:0007669"/>
    <property type="project" value="UniProtKB-UniPathway"/>
</dbReference>
<dbReference type="Gene3D" id="3.90.180.10">
    <property type="entry name" value="Medium-chain alcohol dehydrogenases, catalytic domain"/>
    <property type="match status" value="1"/>
</dbReference>
<dbReference type="Gene3D" id="3.40.50.720">
    <property type="entry name" value="NAD(P)-binding Rossmann-like Domain"/>
    <property type="match status" value="1"/>
</dbReference>
<dbReference type="HAMAP" id="MF_00627">
    <property type="entry name" value="Thr_dehydrog"/>
    <property type="match status" value="1"/>
</dbReference>
<dbReference type="InterPro" id="IPR013149">
    <property type="entry name" value="ADH-like_C"/>
</dbReference>
<dbReference type="InterPro" id="IPR013154">
    <property type="entry name" value="ADH-like_N"/>
</dbReference>
<dbReference type="InterPro" id="IPR002328">
    <property type="entry name" value="ADH_Zn_CS"/>
</dbReference>
<dbReference type="InterPro" id="IPR011032">
    <property type="entry name" value="GroES-like_sf"/>
</dbReference>
<dbReference type="InterPro" id="IPR004627">
    <property type="entry name" value="L-Threonine_3-DHase"/>
</dbReference>
<dbReference type="InterPro" id="IPR036291">
    <property type="entry name" value="NAD(P)-bd_dom_sf"/>
</dbReference>
<dbReference type="InterPro" id="IPR020843">
    <property type="entry name" value="PKS_ER"/>
</dbReference>
<dbReference type="InterPro" id="IPR050129">
    <property type="entry name" value="Zn_alcohol_dh"/>
</dbReference>
<dbReference type="NCBIfam" id="NF003808">
    <property type="entry name" value="PRK05396.1"/>
    <property type="match status" value="1"/>
</dbReference>
<dbReference type="NCBIfam" id="TIGR00692">
    <property type="entry name" value="tdh"/>
    <property type="match status" value="1"/>
</dbReference>
<dbReference type="PANTHER" id="PTHR43401">
    <property type="entry name" value="L-THREONINE 3-DEHYDROGENASE"/>
    <property type="match status" value="1"/>
</dbReference>
<dbReference type="PANTHER" id="PTHR43401:SF2">
    <property type="entry name" value="L-THREONINE 3-DEHYDROGENASE"/>
    <property type="match status" value="1"/>
</dbReference>
<dbReference type="Pfam" id="PF08240">
    <property type="entry name" value="ADH_N"/>
    <property type="match status" value="1"/>
</dbReference>
<dbReference type="Pfam" id="PF00107">
    <property type="entry name" value="ADH_zinc_N"/>
    <property type="match status" value="1"/>
</dbReference>
<dbReference type="SMART" id="SM00829">
    <property type="entry name" value="PKS_ER"/>
    <property type="match status" value="1"/>
</dbReference>
<dbReference type="SUPFAM" id="SSF50129">
    <property type="entry name" value="GroES-like"/>
    <property type="match status" value="1"/>
</dbReference>
<dbReference type="SUPFAM" id="SSF51735">
    <property type="entry name" value="NAD(P)-binding Rossmann-fold domains"/>
    <property type="match status" value="1"/>
</dbReference>
<dbReference type="PROSITE" id="PS00059">
    <property type="entry name" value="ADH_ZINC"/>
    <property type="match status" value="1"/>
</dbReference>
<accession>B2T7X5</accession>
<reference key="1">
    <citation type="journal article" date="2011" name="J. Bacteriol.">
        <title>Complete genome sequence of the plant growth-promoting endophyte Burkholderia phytofirmans strain PsJN.</title>
        <authorList>
            <person name="Weilharter A."/>
            <person name="Mitter B."/>
            <person name="Shin M.V."/>
            <person name="Chain P.S."/>
            <person name="Nowak J."/>
            <person name="Sessitsch A."/>
        </authorList>
    </citation>
    <scope>NUCLEOTIDE SEQUENCE [LARGE SCALE GENOMIC DNA]</scope>
    <source>
        <strain>DSM 17436 / LMG 22146 / PsJN</strain>
    </source>
</reference>
<organism>
    <name type="scientific">Paraburkholderia phytofirmans (strain DSM 17436 / LMG 22146 / PsJN)</name>
    <name type="common">Burkholderia phytofirmans</name>
    <dbReference type="NCBI Taxonomy" id="398527"/>
    <lineage>
        <taxon>Bacteria</taxon>
        <taxon>Pseudomonadati</taxon>
        <taxon>Pseudomonadota</taxon>
        <taxon>Betaproteobacteria</taxon>
        <taxon>Burkholderiales</taxon>
        <taxon>Burkholderiaceae</taxon>
        <taxon>Paraburkholderia</taxon>
    </lineage>
</organism>